<gene>
    <name evidence="1" type="primary">lysS</name>
    <name type="ordered locus">YPTS_3294</name>
</gene>
<sequence>MSEQKPQVAEQAQELNSELQARREKLAVLRGKGIAFPNDFRRENLSDQLHAEFDSKENEELEALNIDVTVAGRMMTRRIMGKASFVTLQDVGGRIQLYVSRDDLPEGVYNEEFKKWDLGDILGARGKLFKTKTGELSIHCSELRLLTKALRPLPDKFHGLADQETRYRQRYLDLIANDESRHTFKVRSQVMSGIRSFMVEKGFMEVETPMMQVIPGGASARPFVTHHNALDIDMYLRIAPELYLKRLVVGGFERVFEINRNFRNEGVSPRHNPEFTMMELYMAYADYKDLIVLTEELFRTLTETILGSSVVQYGEQTFDFGKPFAKLTMKEAICKYRPETNVADLDDMDKAVAIAESLGIKVEKSWGLGRIQCEIFEETAESHLIQPTFITEYPAEVSPLARRNDDNPFITDRFEFFIGGREIGNGFSELNDAEDQAQRFADQVSAKEAGDDEAMFYDEDYITALEHGLPPTAGLGIGIDRMVMLFTNSHTIRDVILFPAMRPVK</sequence>
<accession>B2K0N6</accession>
<feature type="chain" id="PRO_1000101163" description="Lysine--tRNA ligase">
    <location>
        <begin position="1"/>
        <end position="505"/>
    </location>
</feature>
<feature type="binding site" evidence="1">
    <location>
        <position position="415"/>
    </location>
    <ligand>
        <name>Mg(2+)</name>
        <dbReference type="ChEBI" id="CHEBI:18420"/>
        <label>1</label>
    </ligand>
</feature>
<feature type="binding site" evidence="1">
    <location>
        <position position="422"/>
    </location>
    <ligand>
        <name>Mg(2+)</name>
        <dbReference type="ChEBI" id="CHEBI:18420"/>
        <label>1</label>
    </ligand>
</feature>
<feature type="binding site" evidence="1">
    <location>
        <position position="422"/>
    </location>
    <ligand>
        <name>Mg(2+)</name>
        <dbReference type="ChEBI" id="CHEBI:18420"/>
        <label>2</label>
    </ligand>
</feature>
<comment type="catalytic activity">
    <reaction evidence="1">
        <text>tRNA(Lys) + L-lysine + ATP = L-lysyl-tRNA(Lys) + AMP + diphosphate</text>
        <dbReference type="Rhea" id="RHEA:20792"/>
        <dbReference type="Rhea" id="RHEA-COMP:9696"/>
        <dbReference type="Rhea" id="RHEA-COMP:9697"/>
        <dbReference type="ChEBI" id="CHEBI:30616"/>
        <dbReference type="ChEBI" id="CHEBI:32551"/>
        <dbReference type="ChEBI" id="CHEBI:33019"/>
        <dbReference type="ChEBI" id="CHEBI:78442"/>
        <dbReference type="ChEBI" id="CHEBI:78529"/>
        <dbReference type="ChEBI" id="CHEBI:456215"/>
        <dbReference type="EC" id="6.1.1.6"/>
    </reaction>
</comment>
<comment type="cofactor">
    <cofactor evidence="1">
        <name>Mg(2+)</name>
        <dbReference type="ChEBI" id="CHEBI:18420"/>
    </cofactor>
    <text evidence="1">Binds 3 Mg(2+) ions per subunit.</text>
</comment>
<comment type="subunit">
    <text evidence="1">Homodimer.</text>
</comment>
<comment type="subcellular location">
    <subcellularLocation>
        <location evidence="1">Cytoplasm</location>
    </subcellularLocation>
</comment>
<comment type="similarity">
    <text evidence="1">Belongs to the class-II aminoacyl-tRNA synthetase family.</text>
</comment>
<reference key="1">
    <citation type="submission" date="2008-04" db="EMBL/GenBank/DDBJ databases">
        <title>Complete sequence of Yersinia pseudotuberculosis PB1/+.</title>
        <authorList>
            <person name="Copeland A."/>
            <person name="Lucas S."/>
            <person name="Lapidus A."/>
            <person name="Glavina del Rio T."/>
            <person name="Dalin E."/>
            <person name="Tice H."/>
            <person name="Bruce D."/>
            <person name="Goodwin L."/>
            <person name="Pitluck S."/>
            <person name="Munk A.C."/>
            <person name="Brettin T."/>
            <person name="Detter J.C."/>
            <person name="Han C."/>
            <person name="Tapia R."/>
            <person name="Schmutz J."/>
            <person name="Larimer F."/>
            <person name="Land M."/>
            <person name="Hauser L."/>
            <person name="Challacombe J.F."/>
            <person name="Green L."/>
            <person name="Lindler L.E."/>
            <person name="Nikolich M.P."/>
            <person name="Richardson P."/>
        </authorList>
    </citation>
    <scope>NUCLEOTIDE SEQUENCE [LARGE SCALE GENOMIC DNA]</scope>
    <source>
        <strain>PB1/+</strain>
    </source>
</reference>
<dbReference type="EC" id="6.1.1.6" evidence="1"/>
<dbReference type="EMBL" id="CP001048">
    <property type="protein sequence ID" value="ACC90249.1"/>
    <property type="molecule type" value="Genomic_DNA"/>
</dbReference>
<dbReference type="RefSeq" id="WP_002209930.1">
    <property type="nucleotide sequence ID" value="NZ_CP009780.1"/>
</dbReference>
<dbReference type="SMR" id="B2K0N6"/>
<dbReference type="GeneID" id="57973752"/>
<dbReference type="KEGG" id="ypb:YPTS_3294"/>
<dbReference type="PATRIC" id="fig|502801.10.peg.2734"/>
<dbReference type="GO" id="GO:0005829">
    <property type="term" value="C:cytosol"/>
    <property type="evidence" value="ECO:0007669"/>
    <property type="project" value="TreeGrafter"/>
</dbReference>
<dbReference type="GO" id="GO:0005524">
    <property type="term" value="F:ATP binding"/>
    <property type="evidence" value="ECO:0007669"/>
    <property type="project" value="UniProtKB-UniRule"/>
</dbReference>
<dbReference type="GO" id="GO:0004824">
    <property type="term" value="F:lysine-tRNA ligase activity"/>
    <property type="evidence" value="ECO:0007669"/>
    <property type="project" value="UniProtKB-UniRule"/>
</dbReference>
<dbReference type="GO" id="GO:0000287">
    <property type="term" value="F:magnesium ion binding"/>
    <property type="evidence" value="ECO:0007669"/>
    <property type="project" value="UniProtKB-UniRule"/>
</dbReference>
<dbReference type="GO" id="GO:0000049">
    <property type="term" value="F:tRNA binding"/>
    <property type="evidence" value="ECO:0007669"/>
    <property type="project" value="TreeGrafter"/>
</dbReference>
<dbReference type="GO" id="GO:0006430">
    <property type="term" value="P:lysyl-tRNA aminoacylation"/>
    <property type="evidence" value="ECO:0007669"/>
    <property type="project" value="UniProtKB-UniRule"/>
</dbReference>
<dbReference type="CDD" id="cd00775">
    <property type="entry name" value="LysRS_core"/>
    <property type="match status" value="1"/>
</dbReference>
<dbReference type="CDD" id="cd04322">
    <property type="entry name" value="LysRS_N"/>
    <property type="match status" value="1"/>
</dbReference>
<dbReference type="FunFam" id="2.40.50.140:FF:000024">
    <property type="entry name" value="Lysine--tRNA ligase"/>
    <property type="match status" value="1"/>
</dbReference>
<dbReference type="FunFam" id="3.30.930.10:FF:000001">
    <property type="entry name" value="Lysine--tRNA ligase"/>
    <property type="match status" value="1"/>
</dbReference>
<dbReference type="Gene3D" id="3.30.930.10">
    <property type="entry name" value="Bira Bifunctional Protein, Domain 2"/>
    <property type="match status" value="1"/>
</dbReference>
<dbReference type="Gene3D" id="2.40.50.140">
    <property type="entry name" value="Nucleic acid-binding proteins"/>
    <property type="match status" value="1"/>
</dbReference>
<dbReference type="HAMAP" id="MF_00252">
    <property type="entry name" value="Lys_tRNA_synth_class2"/>
    <property type="match status" value="1"/>
</dbReference>
<dbReference type="InterPro" id="IPR004364">
    <property type="entry name" value="Aa-tRNA-synt_II"/>
</dbReference>
<dbReference type="InterPro" id="IPR006195">
    <property type="entry name" value="aa-tRNA-synth_II"/>
</dbReference>
<dbReference type="InterPro" id="IPR045864">
    <property type="entry name" value="aa-tRNA-synth_II/BPL/LPL"/>
</dbReference>
<dbReference type="InterPro" id="IPR002313">
    <property type="entry name" value="Lys-tRNA-ligase_II"/>
</dbReference>
<dbReference type="InterPro" id="IPR034762">
    <property type="entry name" value="Lys-tRNA-ligase_II_bac/euk"/>
</dbReference>
<dbReference type="InterPro" id="IPR044136">
    <property type="entry name" value="Lys-tRNA-ligase_II_N"/>
</dbReference>
<dbReference type="InterPro" id="IPR018149">
    <property type="entry name" value="Lys-tRNA-synth_II_C"/>
</dbReference>
<dbReference type="InterPro" id="IPR012340">
    <property type="entry name" value="NA-bd_OB-fold"/>
</dbReference>
<dbReference type="InterPro" id="IPR004365">
    <property type="entry name" value="NA-bd_OB_tRNA"/>
</dbReference>
<dbReference type="NCBIfam" id="TIGR00499">
    <property type="entry name" value="lysS_bact"/>
    <property type="match status" value="1"/>
</dbReference>
<dbReference type="NCBIfam" id="NF001756">
    <property type="entry name" value="PRK00484.1"/>
    <property type="match status" value="1"/>
</dbReference>
<dbReference type="PANTHER" id="PTHR42918:SF15">
    <property type="entry name" value="LYSINE--TRNA LIGASE, CHLOROPLASTIC_MITOCHONDRIAL"/>
    <property type="match status" value="1"/>
</dbReference>
<dbReference type="PANTHER" id="PTHR42918">
    <property type="entry name" value="LYSYL-TRNA SYNTHETASE"/>
    <property type="match status" value="1"/>
</dbReference>
<dbReference type="Pfam" id="PF00152">
    <property type="entry name" value="tRNA-synt_2"/>
    <property type="match status" value="1"/>
</dbReference>
<dbReference type="Pfam" id="PF01336">
    <property type="entry name" value="tRNA_anti-codon"/>
    <property type="match status" value="1"/>
</dbReference>
<dbReference type="PIRSF" id="PIRSF039101">
    <property type="entry name" value="LysRS2"/>
    <property type="match status" value="1"/>
</dbReference>
<dbReference type="PRINTS" id="PR00982">
    <property type="entry name" value="TRNASYNTHLYS"/>
</dbReference>
<dbReference type="SUPFAM" id="SSF55681">
    <property type="entry name" value="Class II aaRS and biotin synthetases"/>
    <property type="match status" value="1"/>
</dbReference>
<dbReference type="SUPFAM" id="SSF50249">
    <property type="entry name" value="Nucleic acid-binding proteins"/>
    <property type="match status" value="1"/>
</dbReference>
<dbReference type="PROSITE" id="PS50862">
    <property type="entry name" value="AA_TRNA_LIGASE_II"/>
    <property type="match status" value="1"/>
</dbReference>
<organism>
    <name type="scientific">Yersinia pseudotuberculosis serotype IB (strain PB1/+)</name>
    <dbReference type="NCBI Taxonomy" id="502801"/>
    <lineage>
        <taxon>Bacteria</taxon>
        <taxon>Pseudomonadati</taxon>
        <taxon>Pseudomonadota</taxon>
        <taxon>Gammaproteobacteria</taxon>
        <taxon>Enterobacterales</taxon>
        <taxon>Yersiniaceae</taxon>
        <taxon>Yersinia</taxon>
    </lineage>
</organism>
<evidence type="ECO:0000255" key="1">
    <source>
        <dbReference type="HAMAP-Rule" id="MF_00252"/>
    </source>
</evidence>
<protein>
    <recommendedName>
        <fullName evidence="1">Lysine--tRNA ligase</fullName>
        <ecNumber evidence="1">6.1.1.6</ecNumber>
    </recommendedName>
    <alternativeName>
        <fullName evidence="1">Lysyl-tRNA synthetase</fullName>
        <shortName evidence="1">LysRS</shortName>
    </alternativeName>
</protein>
<proteinExistence type="inferred from homology"/>
<name>SYK_YERPB</name>
<keyword id="KW-0030">Aminoacyl-tRNA synthetase</keyword>
<keyword id="KW-0067">ATP-binding</keyword>
<keyword id="KW-0963">Cytoplasm</keyword>
<keyword id="KW-0436">Ligase</keyword>
<keyword id="KW-0460">Magnesium</keyword>
<keyword id="KW-0479">Metal-binding</keyword>
<keyword id="KW-0547">Nucleotide-binding</keyword>
<keyword id="KW-0648">Protein biosynthesis</keyword>